<reference key="1">
    <citation type="journal article" date="2000" name="Nature">
        <title>The genome sequence of the plant pathogen Xylella fastidiosa.</title>
        <authorList>
            <person name="Simpson A.J.G."/>
            <person name="Reinach F.C."/>
            <person name="Arruda P."/>
            <person name="Abreu F.A."/>
            <person name="Acencio M."/>
            <person name="Alvarenga R."/>
            <person name="Alves L.M.C."/>
            <person name="Araya J.E."/>
            <person name="Baia G.S."/>
            <person name="Baptista C.S."/>
            <person name="Barros M.H."/>
            <person name="Bonaccorsi E.D."/>
            <person name="Bordin S."/>
            <person name="Bove J.M."/>
            <person name="Briones M.R.S."/>
            <person name="Bueno M.R.P."/>
            <person name="Camargo A.A."/>
            <person name="Camargo L.E.A."/>
            <person name="Carraro D.M."/>
            <person name="Carrer H."/>
            <person name="Colauto N.B."/>
            <person name="Colombo C."/>
            <person name="Costa F.F."/>
            <person name="Costa M.C.R."/>
            <person name="Costa-Neto C.M."/>
            <person name="Coutinho L.L."/>
            <person name="Cristofani M."/>
            <person name="Dias-Neto E."/>
            <person name="Docena C."/>
            <person name="El-Dorry H."/>
            <person name="Facincani A.P."/>
            <person name="Ferreira A.J.S."/>
            <person name="Ferreira V.C.A."/>
            <person name="Ferro J.A."/>
            <person name="Fraga J.S."/>
            <person name="Franca S.C."/>
            <person name="Franco M.C."/>
            <person name="Frohme M."/>
            <person name="Furlan L.R."/>
            <person name="Garnier M."/>
            <person name="Goldman G.H."/>
            <person name="Goldman M.H.S."/>
            <person name="Gomes S.L."/>
            <person name="Gruber A."/>
            <person name="Ho P.L."/>
            <person name="Hoheisel J.D."/>
            <person name="Junqueira M.L."/>
            <person name="Kemper E.L."/>
            <person name="Kitajima J.P."/>
            <person name="Krieger J.E."/>
            <person name="Kuramae E.E."/>
            <person name="Laigret F."/>
            <person name="Lambais M.R."/>
            <person name="Leite L.C.C."/>
            <person name="Lemos E.G.M."/>
            <person name="Lemos M.V.F."/>
            <person name="Lopes S.A."/>
            <person name="Lopes C.R."/>
            <person name="Machado J.A."/>
            <person name="Machado M.A."/>
            <person name="Madeira A.M.B.N."/>
            <person name="Madeira H.M.F."/>
            <person name="Marino C.L."/>
            <person name="Marques M.V."/>
            <person name="Martins E.A.L."/>
            <person name="Martins E.M.F."/>
            <person name="Matsukuma A.Y."/>
            <person name="Menck C.F.M."/>
            <person name="Miracca E.C."/>
            <person name="Miyaki C.Y."/>
            <person name="Monteiro-Vitorello C.B."/>
            <person name="Moon D.H."/>
            <person name="Nagai M.A."/>
            <person name="Nascimento A.L.T.O."/>
            <person name="Netto L.E.S."/>
            <person name="Nhani A. Jr."/>
            <person name="Nobrega F.G."/>
            <person name="Nunes L.R."/>
            <person name="Oliveira M.A."/>
            <person name="de Oliveira M.C."/>
            <person name="de Oliveira R.C."/>
            <person name="Palmieri D.A."/>
            <person name="Paris A."/>
            <person name="Peixoto B.R."/>
            <person name="Pereira G.A.G."/>
            <person name="Pereira H.A. Jr."/>
            <person name="Pesquero J.B."/>
            <person name="Quaggio R.B."/>
            <person name="Roberto P.G."/>
            <person name="Rodrigues V."/>
            <person name="de Rosa A.J.M."/>
            <person name="de Rosa V.E. Jr."/>
            <person name="de Sa R.G."/>
            <person name="Santelli R.V."/>
            <person name="Sawasaki H.E."/>
            <person name="da Silva A.C.R."/>
            <person name="da Silva A.M."/>
            <person name="da Silva F.R."/>
            <person name="Silva W.A. Jr."/>
            <person name="da Silveira J.F."/>
            <person name="Silvestri M.L.Z."/>
            <person name="Siqueira W.J."/>
            <person name="de Souza A.A."/>
            <person name="de Souza A.P."/>
            <person name="Terenzi M.F."/>
            <person name="Truffi D."/>
            <person name="Tsai S.M."/>
            <person name="Tsuhako M.H."/>
            <person name="Vallada H."/>
            <person name="Van Sluys M.A."/>
            <person name="Verjovski-Almeida S."/>
            <person name="Vettore A.L."/>
            <person name="Zago M.A."/>
            <person name="Zatz M."/>
            <person name="Meidanis J."/>
            <person name="Setubal J.C."/>
        </authorList>
    </citation>
    <scope>NUCLEOTIDE SEQUENCE [LARGE SCALE GENOMIC DNA]</scope>
    <source>
        <strain>9a5c</strain>
    </source>
</reference>
<feature type="chain" id="PRO_0000220273" description="Uncharacterized protein XF_0503/XF_2124">
    <location>
        <begin position="1"/>
        <end position="200"/>
    </location>
</feature>
<accession>Q9P9T6</accession>
<sequence>MHLPLEARMKREPRFLPPLQSVIYGYTRRMLDQTAMNAQSFAMVLAEKYLSLTAPDVRGVALRIGDDVAEDMRNNAQVLRRYMDGTVKTLPADLVDAWMLALPEPYRGECERDLARRRGVLPVRLPTANPAARVVGVAELVSEFAQLLEVIAPALADGRIDTNDLPFARRILDESDDVIAAVLGIRGQVQAMFQQENTDA</sequence>
<name>Y503_XYLFA</name>
<dbReference type="EMBL" id="AE003849">
    <property type="protein sequence ID" value="AAF83313.1"/>
    <property type="molecule type" value="Genomic_DNA"/>
</dbReference>
<dbReference type="EMBL" id="AE003849">
    <property type="protein sequence ID" value="AAF84923.1"/>
    <property type="molecule type" value="Genomic_DNA"/>
</dbReference>
<dbReference type="PIR" id="D82596">
    <property type="entry name" value="D82596"/>
</dbReference>
<dbReference type="STRING" id="160492.XF_0503"/>
<dbReference type="KEGG" id="xfa:XF_0503"/>
<dbReference type="KEGG" id="xfa:XF_2124"/>
<dbReference type="eggNOG" id="ENOG5033JMQ">
    <property type="taxonomic scope" value="Bacteria"/>
</dbReference>
<dbReference type="HOGENOM" id="CLU_1325949_0_0_6"/>
<dbReference type="Proteomes" id="UP000000812">
    <property type="component" value="Chromosome"/>
</dbReference>
<protein>
    <recommendedName>
        <fullName>Uncharacterized protein XF_0503/XF_2124</fullName>
    </recommendedName>
</protein>
<gene>
    <name type="ordered locus">XF_0503</name>
</gene>
<gene>
    <name type="ordered locus">XF_2124</name>
</gene>
<proteinExistence type="predicted"/>
<organism>
    <name type="scientific">Xylella fastidiosa (strain 9a5c)</name>
    <dbReference type="NCBI Taxonomy" id="160492"/>
    <lineage>
        <taxon>Bacteria</taxon>
        <taxon>Pseudomonadati</taxon>
        <taxon>Pseudomonadota</taxon>
        <taxon>Gammaproteobacteria</taxon>
        <taxon>Lysobacterales</taxon>
        <taxon>Lysobacteraceae</taxon>
        <taxon>Xylella</taxon>
    </lineage>
</organism>